<sequence>MLRYHMQGFSGYGVQYSPFFDNRLAVAAGSNFGLVGNGKLFILEIDRSGRIVEVNSFLTQDCLFDLAWNESHENQVLVAQGDGTLRLFDTTFKEFPIAIFKEHEREVFSCNWNLVNRQNFLSSSWDGSIKIWSPLRKQSLMTLTPRPLEITKMVDPLNAIILKKKSFTGISKNRNCVYQAQFSPHDQNLVLSCSGNSYASLFDIRLPSGKNQNNFLVHSGLEALTCDFNKYRPYVVATGGVDNAIRIWDIRMLNKNESATIKRTVPGQLHNSSCINEIPNAHGLAIRKVTWSPHHSNILMSASYDMTCRIWRDLSNDGAKETYKTNSTDATKGSIFNFTQHSEFVFGADWSLWGKPGYVASTAWDGNLFVWNGLG</sequence>
<accession>P39108</accession>
<accession>D6VSC5</accession>
<proteinExistence type="evidence at protein level"/>
<protein>
    <recommendedName>
        <fullName evidence="8">Peroxisomal targeting signal 2 receptor</fullName>
        <shortName>PTS2 receptor</shortName>
    </recommendedName>
    <alternativeName>
        <fullName evidence="8">Peroxin-7</fullName>
    </alternativeName>
</protein>
<evidence type="ECO:0000269" key="1">
    <source>
    </source>
</evidence>
<evidence type="ECO:0000269" key="2">
    <source>
    </source>
</evidence>
<evidence type="ECO:0000269" key="3">
    <source>
    </source>
</evidence>
<evidence type="ECO:0000269" key="4">
    <source>
    </source>
</evidence>
<evidence type="ECO:0000269" key="5">
    <source>
    </source>
</evidence>
<evidence type="ECO:0000303" key="6">
    <source>
    </source>
</evidence>
<evidence type="ECO:0000303" key="7">
    <source>
    </source>
</evidence>
<evidence type="ECO:0000305" key="8"/>
<evidence type="ECO:0000312" key="9">
    <source>
        <dbReference type="SGD" id="S000002549"/>
    </source>
</evidence>
<evidence type="ECO:0007744" key="10">
    <source>
        <dbReference type="PDB" id="3W15"/>
    </source>
</evidence>
<evidence type="ECO:0007829" key="11">
    <source>
        <dbReference type="PDB" id="3W15"/>
    </source>
</evidence>
<keyword id="KW-0002">3D-structure</keyword>
<keyword id="KW-0963">Cytoplasm</keyword>
<keyword id="KW-0576">Peroxisome</keyword>
<keyword id="KW-0653">Protein transport</keyword>
<keyword id="KW-1185">Reference proteome</keyword>
<keyword id="KW-0677">Repeat</keyword>
<keyword id="KW-0813">Transport</keyword>
<keyword id="KW-0853">WD repeat</keyword>
<gene>
    <name evidence="9" type="primary">PEX7</name>
    <name evidence="7" type="synonym">PAS7</name>
    <name evidence="6" type="synonym">PEB1</name>
    <name type="ordered locus">YDR142C</name>
    <name type="ORF">YD2943.01C</name>
    <name type="ORF">YD9302.18C</name>
</gene>
<organism>
    <name type="scientific">Saccharomyces cerevisiae (strain ATCC 204508 / S288c)</name>
    <name type="common">Baker's yeast</name>
    <dbReference type="NCBI Taxonomy" id="559292"/>
    <lineage>
        <taxon>Eukaryota</taxon>
        <taxon>Fungi</taxon>
        <taxon>Dikarya</taxon>
        <taxon>Ascomycota</taxon>
        <taxon>Saccharomycotina</taxon>
        <taxon>Saccharomycetes</taxon>
        <taxon>Saccharomycetales</taxon>
        <taxon>Saccharomycetaceae</taxon>
        <taxon>Saccharomyces</taxon>
    </lineage>
</organism>
<feature type="chain" id="PRO_0000051120" description="Peroxisomal targeting signal 2 receptor">
    <location>
        <begin position="1"/>
        <end position="375"/>
    </location>
</feature>
<feature type="repeat" description="WD 1">
    <location>
        <begin position="58"/>
        <end position="89"/>
    </location>
</feature>
<feature type="repeat" description="WD 2">
    <location>
        <begin position="102"/>
        <end position="133"/>
    </location>
</feature>
<feature type="repeat" description="WD 3">
    <location>
        <begin position="172"/>
        <end position="203"/>
    </location>
</feature>
<feature type="repeat" description="WD 4">
    <location>
        <begin position="218"/>
        <end position="249"/>
    </location>
</feature>
<feature type="repeat" description="WD 5">
    <location>
        <begin position="281"/>
        <end position="312"/>
    </location>
</feature>
<feature type="repeat" description="WD 6">
    <location>
        <begin position="340"/>
        <end position="372"/>
    </location>
</feature>
<feature type="mutagenesis site" description="Decreased formation of a ternary complex composed of PEX21 and PEX7 along with PTS2-containing cargo proteins." evidence="2">
    <original>FGL</original>
    <variation>AGA</variation>
    <location>
        <begin position="32"/>
        <end position="34"/>
    </location>
</feature>
<feature type="mutagenesis site" description="Does not prevent peroxisomal import of proteins containing a C-terminal PTS2-type peroxisomal targeting signal, such as 3-oxoacyl-CoA thiolase." evidence="2">
    <original>L</original>
    <variation>A</variation>
    <location>
        <position position="34"/>
    </location>
</feature>
<feature type="mutagenesis site" description="Decreased formation of a ternary complex composed of PEX21 and PEX7 along with PTS2-containing cargo proteins." evidence="2">
    <original>L</original>
    <variation>D</variation>
    <location>
        <position position="34"/>
    </location>
</feature>
<feature type="mutagenesis site" description="Abolished ability to mediate peroxisomal import of proteins containing a C-terminal PTS2-type peroxisomal targeting signal; when associated with H-106." evidence="2">
    <original>D</original>
    <variation>R</variation>
    <location>
        <position position="61"/>
    </location>
</feature>
<feature type="mutagenesis site" description="Abolished ability to mediate peroxisomal import of proteins containing a C-terminal PTS2-type peroxisomal targeting signal; when associated with R-61." evidence="2">
    <original>E</original>
    <variation>H</variation>
    <location>
        <position position="106"/>
    </location>
</feature>
<feature type="mutagenesis site" description="Does not prevent peroxisomal import of proteins containing a C-terminal PTS2-type peroxisomal targeting signal, such as 3-oxoacyl-CoA thiolase. Decreased formation of a ternary complex composed of PEX21 and PEX7 along with PTS2-containing cargo proteins; when associated with A-364." evidence="2">
    <original>F</original>
    <variation>A</variation>
    <location>
        <position position="344"/>
    </location>
</feature>
<feature type="mutagenesis site" description="Decreased formation of a ternary complex composed of PEX21 and PEX7 along with PTS2-containing cargo proteins; when associated with A-344." evidence="2">
    <original>W</original>
    <variation>A</variation>
    <location>
        <position position="364"/>
    </location>
</feature>
<feature type="strand" evidence="11">
    <location>
        <begin position="2"/>
        <end position="5"/>
    </location>
</feature>
<feature type="strand" evidence="11">
    <location>
        <begin position="9"/>
        <end position="16"/>
    </location>
</feature>
<feature type="strand" evidence="11">
    <location>
        <begin position="23"/>
        <end position="30"/>
    </location>
</feature>
<feature type="helix" evidence="11">
    <location>
        <begin position="31"/>
        <end position="33"/>
    </location>
</feature>
<feature type="strand" evidence="11">
    <location>
        <begin position="38"/>
        <end position="45"/>
    </location>
</feature>
<feature type="strand" evidence="11">
    <location>
        <begin position="51"/>
        <end position="61"/>
    </location>
</feature>
<feature type="strand" evidence="11">
    <location>
        <begin position="63"/>
        <end position="68"/>
    </location>
</feature>
<feature type="strand" evidence="11">
    <location>
        <begin position="75"/>
        <end position="80"/>
    </location>
</feature>
<feature type="strand" evidence="11">
    <location>
        <begin position="83"/>
        <end position="89"/>
    </location>
</feature>
<feature type="strand" evidence="11">
    <location>
        <begin position="97"/>
        <end position="101"/>
    </location>
</feature>
<feature type="strand" evidence="11">
    <location>
        <begin position="107"/>
        <end position="112"/>
    </location>
</feature>
<feature type="strand" evidence="11">
    <location>
        <begin position="114"/>
        <end position="118"/>
    </location>
</feature>
<feature type="strand" evidence="11">
    <location>
        <begin position="120"/>
        <end position="124"/>
    </location>
</feature>
<feature type="strand" evidence="11">
    <location>
        <begin position="129"/>
        <end position="132"/>
    </location>
</feature>
<feature type="strand" evidence="11">
    <location>
        <begin position="140"/>
        <end position="143"/>
    </location>
</feature>
<feature type="helix" evidence="11">
    <location>
        <begin position="148"/>
        <end position="153"/>
    </location>
</feature>
<feature type="helix" evidence="11">
    <location>
        <begin position="158"/>
        <end position="160"/>
    </location>
</feature>
<feature type="strand" evidence="11">
    <location>
        <begin position="177"/>
        <end position="182"/>
    </location>
</feature>
<feature type="strand" evidence="11">
    <location>
        <begin position="189"/>
        <end position="194"/>
    </location>
</feature>
<feature type="strand" evidence="11">
    <location>
        <begin position="197"/>
        <end position="203"/>
    </location>
</feature>
<feature type="strand" evidence="11">
    <location>
        <begin position="210"/>
        <end position="216"/>
    </location>
</feature>
<feature type="strand" evidence="11">
    <location>
        <begin position="223"/>
        <end position="228"/>
    </location>
</feature>
<feature type="strand" evidence="11">
    <location>
        <begin position="235"/>
        <end position="240"/>
    </location>
</feature>
<feature type="strand" evidence="11">
    <location>
        <begin position="245"/>
        <end position="249"/>
    </location>
</feature>
<feature type="strand" evidence="11">
    <location>
        <begin position="274"/>
        <end position="278"/>
    </location>
</feature>
<feature type="strand" evidence="11">
    <location>
        <begin position="281"/>
        <end position="284"/>
    </location>
</feature>
<feature type="strand" evidence="11">
    <location>
        <begin position="286"/>
        <end position="291"/>
    </location>
</feature>
<feature type="strand" evidence="11">
    <location>
        <begin position="298"/>
        <end position="303"/>
    </location>
</feature>
<feature type="strand" evidence="11">
    <location>
        <begin position="308"/>
        <end position="312"/>
    </location>
</feature>
<feature type="turn" evidence="11">
    <location>
        <begin position="326"/>
        <end position="328"/>
    </location>
</feature>
<feature type="turn" evidence="11">
    <location>
        <begin position="330"/>
        <end position="333"/>
    </location>
</feature>
<feature type="strand" evidence="11">
    <location>
        <begin position="334"/>
        <end position="338"/>
    </location>
</feature>
<feature type="strand" evidence="11">
    <location>
        <begin position="345"/>
        <end position="350"/>
    </location>
</feature>
<feature type="strand" evidence="11">
    <location>
        <begin position="352"/>
        <end position="355"/>
    </location>
</feature>
<feature type="strand" evidence="11">
    <location>
        <begin position="358"/>
        <end position="363"/>
    </location>
</feature>
<feature type="strand" evidence="11">
    <location>
        <begin position="366"/>
        <end position="372"/>
    </location>
</feature>
<reference key="1">
    <citation type="journal article" date="1994" name="EMBO J.">
        <title>PAS7 encodes a novel yeast member of the WD-40 protein family essential for import of 3-oxoacyl-CoA thiolase, a PTS2-containing protein, into peroxisomes.</title>
        <authorList>
            <person name="Marzioch M."/>
            <person name="Erdmann R."/>
            <person name="Veenhuis M."/>
            <person name="Kunau W.-H."/>
        </authorList>
    </citation>
    <scope>NUCLEOTIDE SEQUENCE [GENOMIC DNA]</scope>
    <scope>FUNCTION</scope>
    <scope>SUBCELLULAR LOCATION</scope>
</reference>
<reference key="2">
    <citation type="journal article" date="1995" name="J. Cell Biol.">
        <title>PEB1 (PAS7) in Saccharomyces cerevisiae encodes a hydrophilic, intra-peroxisomal protein that is a member of the WD repeat family and is essential for the import of thiolase into peroxisomes.</title>
        <authorList>
            <person name="Zhang J.W."/>
            <person name="Lazarow P.B."/>
        </authorList>
    </citation>
    <scope>NUCLEOTIDE SEQUENCE [GENOMIC DNA]</scope>
    <scope>FUNCTION</scope>
    <scope>SUBCELLULAR LOCATION</scope>
    <source>
        <strain>S288c / GRF88</strain>
    </source>
</reference>
<reference key="3">
    <citation type="journal article" date="1997" name="Nature">
        <title>The nucleotide sequence of Saccharomyces cerevisiae chromosome IV.</title>
        <authorList>
            <person name="Jacq C."/>
            <person name="Alt-Moerbe J."/>
            <person name="Andre B."/>
            <person name="Arnold W."/>
            <person name="Bahr A."/>
            <person name="Ballesta J.P.G."/>
            <person name="Bargues M."/>
            <person name="Baron L."/>
            <person name="Becker A."/>
            <person name="Biteau N."/>
            <person name="Bloecker H."/>
            <person name="Blugeon C."/>
            <person name="Boskovic J."/>
            <person name="Brandt P."/>
            <person name="Brueckner M."/>
            <person name="Buitrago M.J."/>
            <person name="Coster F."/>
            <person name="Delaveau T."/>
            <person name="del Rey F."/>
            <person name="Dujon B."/>
            <person name="Eide L.G."/>
            <person name="Garcia-Cantalejo J.M."/>
            <person name="Goffeau A."/>
            <person name="Gomez-Peris A."/>
            <person name="Granotier C."/>
            <person name="Hanemann V."/>
            <person name="Hankeln T."/>
            <person name="Hoheisel J.D."/>
            <person name="Jaeger W."/>
            <person name="Jimenez A."/>
            <person name="Jonniaux J.-L."/>
            <person name="Kraemer C."/>
            <person name="Kuester H."/>
            <person name="Laamanen P."/>
            <person name="Legros Y."/>
            <person name="Louis E.J."/>
            <person name="Moeller-Rieker S."/>
            <person name="Monnet A."/>
            <person name="Moro M."/>
            <person name="Mueller-Auer S."/>
            <person name="Nussbaumer B."/>
            <person name="Paricio N."/>
            <person name="Paulin L."/>
            <person name="Perea J."/>
            <person name="Perez-Alonso M."/>
            <person name="Perez-Ortin J.E."/>
            <person name="Pohl T.M."/>
            <person name="Prydz H."/>
            <person name="Purnelle B."/>
            <person name="Rasmussen S.W."/>
            <person name="Remacha M.A."/>
            <person name="Revuelta J.L."/>
            <person name="Rieger M."/>
            <person name="Salom D."/>
            <person name="Saluz H.P."/>
            <person name="Saiz J.E."/>
            <person name="Saren A.-M."/>
            <person name="Schaefer M."/>
            <person name="Scharfe M."/>
            <person name="Schmidt E.R."/>
            <person name="Schneider C."/>
            <person name="Scholler P."/>
            <person name="Schwarz S."/>
            <person name="Soler-Mira A."/>
            <person name="Urrestarazu L.A."/>
            <person name="Verhasselt P."/>
            <person name="Vissers S."/>
            <person name="Voet M."/>
            <person name="Volckaert G."/>
            <person name="Wagner G."/>
            <person name="Wambutt R."/>
            <person name="Wedler E."/>
            <person name="Wedler H."/>
            <person name="Woelfl S."/>
            <person name="Harris D.E."/>
            <person name="Bowman S."/>
            <person name="Brown D."/>
            <person name="Churcher C.M."/>
            <person name="Connor R."/>
            <person name="Dedman K."/>
            <person name="Gentles S."/>
            <person name="Hamlin N."/>
            <person name="Hunt S."/>
            <person name="Jones L."/>
            <person name="McDonald S."/>
            <person name="Murphy L.D."/>
            <person name="Niblett D."/>
            <person name="Odell C."/>
            <person name="Oliver K."/>
            <person name="Rajandream M.A."/>
            <person name="Richards C."/>
            <person name="Shore L."/>
            <person name="Walsh S.V."/>
            <person name="Barrell B.G."/>
            <person name="Dietrich F.S."/>
            <person name="Mulligan J.T."/>
            <person name="Allen E."/>
            <person name="Araujo R."/>
            <person name="Aviles E."/>
            <person name="Berno A."/>
            <person name="Carpenter J."/>
            <person name="Chen E."/>
            <person name="Cherry J.M."/>
            <person name="Chung E."/>
            <person name="Duncan M."/>
            <person name="Hunicke-Smith S."/>
            <person name="Hyman R.W."/>
            <person name="Komp C."/>
            <person name="Lashkari D."/>
            <person name="Lew H."/>
            <person name="Lin D."/>
            <person name="Mosedale D."/>
            <person name="Nakahara K."/>
            <person name="Namath A."/>
            <person name="Oefner P."/>
            <person name="Oh C."/>
            <person name="Petel F.X."/>
            <person name="Roberts D."/>
            <person name="Schramm S."/>
            <person name="Schroeder M."/>
            <person name="Shogren T."/>
            <person name="Shroff N."/>
            <person name="Winant A."/>
            <person name="Yelton M.A."/>
            <person name="Botstein D."/>
            <person name="Davis R.W."/>
            <person name="Johnston M."/>
            <person name="Andrews S."/>
            <person name="Brinkman R."/>
            <person name="Cooper J."/>
            <person name="Ding H."/>
            <person name="Du Z."/>
            <person name="Favello A."/>
            <person name="Fulton L."/>
            <person name="Gattung S."/>
            <person name="Greco T."/>
            <person name="Hallsworth K."/>
            <person name="Hawkins J."/>
            <person name="Hillier L.W."/>
            <person name="Jier M."/>
            <person name="Johnson D."/>
            <person name="Johnston L."/>
            <person name="Kirsten J."/>
            <person name="Kucaba T."/>
            <person name="Langston Y."/>
            <person name="Latreille P."/>
            <person name="Le T."/>
            <person name="Mardis E."/>
            <person name="Menezes S."/>
            <person name="Miller N."/>
            <person name="Nhan M."/>
            <person name="Pauley A."/>
            <person name="Peluso D."/>
            <person name="Rifkin L."/>
            <person name="Riles L."/>
            <person name="Taich A."/>
            <person name="Trevaskis E."/>
            <person name="Vignati D."/>
            <person name="Wilcox L."/>
            <person name="Wohldman P."/>
            <person name="Vaudin M."/>
            <person name="Wilson R."/>
            <person name="Waterston R."/>
            <person name="Albermann K."/>
            <person name="Hani J."/>
            <person name="Heumann K."/>
            <person name="Kleine K."/>
            <person name="Mewes H.-W."/>
            <person name="Zollner A."/>
            <person name="Zaccaria P."/>
        </authorList>
    </citation>
    <scope>NUCLEOTIDE SEQUENCE [LARGE SCALE GENOMIC DNA]</scope>
    <source>
        <strain>ATCC 204508 / S288c</strain>
    </source>
</reference>
<reference key="4">
    <citation type="journal article" date="2014" name="G3 (Bethesda)">
        <title>The reference genome sequence of Saccharomyces cerevisiae: Then and now.</title>
        <authorList>
            <person name="Engel S.R."/>
            <person name="Dietrich F.S."/>
            <person name="Fisk D.G."/>
            <person name="Binkley G."/>
            <person name="Balakrishnan R."/>
            <person name="Costanzo M.C."/>
            <person name="Dwight S.S."/>
            <person name="Hitz B.C."/>
            <person name="Karra K."/>
            <person name="Nash R.S."/>
            <person name="Weng S."/>
            <person name="Wong E.D."/>
            <person name="Lloyd P."/>
            <person name="Skrzypek M.S."/>
            <person name="Miyasato S.R."/>
            <person name="Simison M."/>
            <person name="Cherry J.M."/>
        </authorList>
    </citation>
    <scope>GENOME REANNOTATION</scope>
    <source>
        <strain>ATCC 204508 / S288c</strain>
    </source>
</reference>
<reference key="5">
    <citation type="journal article" date="2007" name="Genome Res.">
        <title>Approaching a complete repository of sequence-verified protein-encoding clones for Saccharomyces cerevisiae.</title>
        <authorList>
            <person name="Hu Y."/>
            <person name="Rolfs A."/>
            <person name="Bhullar B."/>
            <person name="Murthy T.V.S."/>
            <person name="Zhu C."/>
            <person name="Berger M.F."/>
            <person name="Camargo A.A."/>
            <person name="Kelley F."/>
            <person name="McCarron S."/>
            <person name="Jepson D."/>
            <person name="Richardson A."/>
            <person name="Raphael J."/>
            <person name="Moreira D."/>
            <person name="Taycher E."/>
            <person name="Zuo D."/>
            <person name="Mohr S."/>
            <person name="Kane M.F."/>
            <person name="Williamson J."/>
            <person name="Simpson A.J.G."/>
            <person name="Bulyk M.L."/>
            <person name="Harlow E."/>
            <person name="Marsischky G."/>
            <person name="Kolodner R.D."/>
            <person name="LaBaer J."/>
        </authorList>
    </citation>
    <scope>NUCLEOTIDE SEQUENCE [GENOMIC DNA]</scope>
    <source>
        <strain>ATCC 204508 / S288c</strain>
    </source>
</reference>
<reference key="6">
    <citation type="journal article" date="1997" name="Cell">
        <title>Pex14p, a peroxisomal membrane protein binding both receptors of the two PTS-dependent import pathways.</title>
        <authorList>
            <person name="Albertini M."/>
            <person name="Rehling P."/>
            <person name="Erdmann R."/>
            <person name="Girzalsky W."/>
            <person name="Kiel J.A.K.W."/>
            <person name="Veenhuis M."/>
            <person name="Kunau W.-H."/>
        </authorList>
    </citation>
    <scope>FUNCTION</scope>
</reference>
<reference key="7">
    <citation type="journal article" date="2003" name="Mol. Cell">
        <title>Assigning function to yeast proteins by integration of technologies.</title>
        <authorList>
            <person name="Hazbun T.R."/>
            <person name="Malmstroem L."/>
            <person name="Anderson S."/>
            <person name="Graczyk B.J."/>
            <person name="Fox B."/>
            <person name="Riffle M."/>
            <person name="Sundin B.A."/>
            <person name="Aranda J.D."/>
            <person name="McDonald W.H."/>
            <person name="Chiu C.-H."/>
            <person name="Snydsman B.E."/>
            <person name="Bradley P."/>
            <person name="Muller E.G.D."/>
            <person name="Fields S."/>
            <person name="Baker D."/>
            <person name="Yates J.R. III"/>
            <person name="Davis T.N."/>
        </authorList>
    </citation>
    <scope>IDENTIFICATION BY MASS SPECTROMETRY</scope>
</reference>
<reference key="8">
    <citation type="journal article" date="2003" name="Nature">
        <title>Global analysis of protein expression in yeast.</title>
        <authorList>
            <person name="Ghaemmaghami S."/>
            <person name="Huh W.-K."/>
            <person name="Bower K."/>
            <person name="Howson R.W."/>
            <person name="Belle A."/>
            <person name="Dephoure N."/>
            <person name="O'Shea E.K."/>
            <person name="Weissman J.S."/>
        </authorList>
    </citation>
    <scope>LEVEL OF PROTEIN EXPRESSION [LARGE SCALE ANALYSIS]</scope>
</reference>
<reference evidence="10" key="9">
    <citation type="journal article" date="2013" name="Nat. Struct. Mol. Biol.">
        <title>Crystal structure of peroxisomal targeting signal-2 bound to its receptor complex Pex7p-Pex21p.</title>
        <authorList>
            <person name="Pan D."/>
            <person name="Nakatsu T."/>
            <person name="Kato H."/>
        </authorList>
    </citation>
    <scope>X-RAY CRYSTALLOGRAPHY (1.80 ANGSTROMS) IN COMPLEX WITH PEX21 AND PTS2-TYPE PEROXISOMAL TARGETING SIGNAL</scope>
    <scope>FUNCTION</scope>
    <scope>INTERACTION WITH PEX21</scope>
    <scope>MUTAGENESIS OF 32-PHE--LEU-34; LEU-34; ASP-61; GLU-106; PHE-344 AND TRP-364</scope>
</reference>
<name>PEX7_YEAST</name>
<dbReference type="EMBL" id="X81424">
    <property type="protein sequence ID" value="CAA57183.1"/>
    <property type="molecule type" value="Genomic_DNA"/>
</dbReference>
<dbReference type="EMBL" id="X83704">
    <property type="protein sequence ID" value="CAA58677.1"/>
    <property type="molecule type" value="Genomic_DNA"/>
</dbReference>
<dbReference type="EMBL" id="Z54139">
    <property type="protein sequence ID" value="CAA90811.1"/>
    <property type="molecule type" value="Genomic_DNA"/>
</dbReference>
<dbReference type="EMBL" id="Z48179">
    <property type="protein sequence ID" value="CAA88224.1"/>
    <property type="molecule type" value="Genomic_DNA"/>
</dbReference>
<dbReference type="EMBL" id="AY557700">
    <property type="protein sequence ID" value="AAS56026.1"/>
    <property type="molecule type" value="Genomic_DNA"/>
</dbReference>
<dbReference type="EMBL" id="BK006938">
    <property type="protein sequence ID" value="DAA11985.1"/>
    <property type="molecule type" value="Genomic_DNA"/>
</dbReference>
<dbReference type="PIR" id="S50228">
    <property type="entry name" value="S50228"/>
</dbReference>
<dbReference type="RefSeq" id="NP_010426.1">
    <property type="nucleotide sequence ID" value="NM_001180449.1"/>
</dbReference>
<dbReference type="PDB" id="3W15">
    <property type="method" value="X-ray"/>
    <property type="resolution" value="1.80 A"/>
    <property type="chains" value="A=1-375"/>
</dbReference>
<dbReference type="PDBsum" id="3W15"/>
<dbReference type="SMR" id="P39108"/>
<dbReference type="BioGRID" id="32196">
    <property type="interactions" value="80"/>
</dbReference>
<dbReference type="ComplexPortal" id="CPX-1905">
    <property type="entry name" value="Peroxisomal PEX7-PEX18 receptor complex"/>
</dbReference>
<dbReference type="ComplexPortal" id="CPX-1906">
    <property type="entry name" value="Peroxisomal PEX7-PEX21 receptor complex"/>
</dbReference>
<dbReference type="DIP" id="DIP-1501N"/>
<dbReference type="FunCoup" id="P39108">
    <property type="interactions" value="577"/>
</dbReference>
<dbReference type="IntAct" id="P39108">
    <property type="interactions" value="56"/>
</dbReference>
<dbReference type="MINT" id="P39108"/>
<dbReference type="STRING" id="4932.YDR142C"/>
<dbReference type="TCDB" id="3.A.20.1.5">
    <property type="family name" value="the peroxisomal protein importer (ppi) family"/>
</dbReference>
<dbReference type="iPTMnet" id="P39108"/>
<dbReference type="PaxDb" id="4932-YDR142C"/>
<dbReference type="PeptideAtlas" id="P39108"/>
<dbReference type="EnsemblFungi" id="YDR142C_mRNA">
    <property type="protein sequence ID" value="YDR142C"/>
    <property type="gene ID" value="YDR142C"/>
</dbReference>
<dbReference type="GeneID" id="851720"/>
<dbReference type="KEGG" id="sce:YDR142C"/>
<dbReference type="AGR" id="SGD:S000002549"/>
<dbReference type="SGD" id="S000002549">
    <property type="gene designation" value="PEX7"/>
</dbReference>
<dbReference type="VEuPathDB" id="FungiDB:YDR142C"/>
<dbReference type="eggNOG" id="KOG0277">
    <property type="taxonomic scope" value="Eukaryota"/>
</dbReference>
<dbReference type="HOGENOM" id="CLU_046581_1_0_1"/>
<dbReference type="InParanoid" id="P39108"/>
<dbReference type="OMA" id="FAVHWNL"/>
<dbReference type="OrthoDB" id="273771at2759"/>
<dbReference type="BioCyc" id="YEAST:G3O-29739-MONOMER"/>
<dbReference type="Reactome" id="R-SCE-9033241">
    <property type="pathway name" value="Peroxisomal protein import"/>
</dbReference>
<dbReference type="BioGRID-ORCS" id="851720">
    <property type="hits" value="0 hits in 10 CRISPR screens"/>
</dbReference>
<dbReference type="EvolutionaryTrace" id="P39108"/>
<dbReference type="PRO" id="PR:P39108"/>
<dbReference type="Proteomes" id="UP000002311">
    <property type="component" value="Chromosome IV"/>
</dbReference>
<dbReference type="RNAct" id="P39108">
    <property type="molecule type" value="protein"/>
</dbReference>
<dbReference type="GO" id="GO:0062137">
    <property type="term" value="C:cargo receptor complex"/>
    <property type="evidence" value="ECO:0000353"/>
    <property type="project" value="ComplexPortal"/>
</dbReference>
<dbReference type="GO" id="GO:0005737">
    <property type="term" value="C:cytoplasm"/>
    <property type="evidence" value="ECO:0000314"/>
    <property type="project" value="ComplexPortal"/>
</dbReference>
<dbReference type="GO" id="GO:0005829">
    <property type="term" value="C:cytosol"/>
    <property type="evidence" value="ECO:0000314"/>
    <property type="project" value="SGD"/>
</dbReference>
<dbReference type="GO" id="GO:0005782">
    <property type="term" value="C:peroxisomal matrix"/>
    <property type="evidence" value="ECO:0000318"/>
    <property type="project" value="GO_Central"/>
</dbReference>
<dbReference type="GO" id="GO:0005778">
    <property type="term" value="C:peroxisomal membrane"/>
    <property type="evidence" value="ECO:0000314"/>
    <property type="project" value="ComplexPortal"/>
</dbReference>
<dbReference type="GO" id="GO:0005777">
    <property type="term" value="C:peroxisome"/>
    <property type="evidence" value="ECO:0000314"/>
    <property type="project" value="SGD"/>
</dbReference>
<dbReference type="GO" id="GO:0005053">
    <property type="term" value="F:peroxisome matrix targeting signal-2 binding"/>
    <property type="evidence" value="ECO:0000314"/>
    <property type="project" value="UniProtKB"/>
</dbReference>
<dbReference type="GO" id="GO:0016558">
    <property type="term" value="P:protein import into peroxisome matrix"/>
    <property type="evidence" value="ECO:0000318"/>
    <property type="project" value="GO_Central"/>
</dbReference>
<dbReference type="GO" id="GO:0016560">
    <property type="term" value="P:protein import into peroxisome matrix, docking"/>
    <property type="evidence" value="ECO:0000353"/>
    <property type="project" value="SGD"/>
</dbReference>
<dbReference type="FunFam" id="2.130.10.10:FF:000538">
    <property type="entry name" value="Peroxisomal targeting signal 2 receptor"/>
    <property type="match status" value="1"/>
</dbReference>
<dbReference type="Gene3D" id="2.130.10.10">
    <property type="entry name" value="YVTN repeat-like/Quinoprotein amine dehydrogenase"/>
    <property type="match status" value="1"/>
</dbReference>
<dbReference type="InterPro" id="IPR020472">
    <property type="entry name" value="G-protein_beta_WD-40_rep"/>
</dbReference>
<dbReference type="InterPro" id="IPR044536">
    <property type="entry name" value="PEX7"/>
</dbReference>
<dbReference type="InterPro" id="IPR015943">
    <property type="entry name" value="WD40/YVTN_repeat-like_dom_sf"/>
</dbReference>
<dbReference type="InterPro" id="IPR019775">
    <property type="entry name" value="WD40_repeat_CS"/>
</dbReference>
<dbReference type="InterPro" id="IPR036322">
    <property type="entry name" value="WD40_repeat_dom_sf"/>
</dbReference>
<dbReference type="InterPro" id="IPR001680">
    <property type="entry name" value="WD40_rpt"/>
</dbReference>
<dbReference type="PANTHER" id="PTHR46027">
    <property type="entry name" value="PEROXISOMAL TARGETING SIGNAL 2 RECEPTOR"/>
    <property type="match status" value="1"/>
</dbReference>
<dbReference type="PANTHER" id="PTHR46027:SF1">
    <property type="entry name" value="PEROXISOMAL TARGETING SIGNAL 2 RECEPTOR"/>
    <property type="match status" value="1"/>
</dbReference>
<dbReference type="Pfam" id="PF00400">
    <property type="entry name" value="WD40"/>
    <property type="match status" value="3"/>
</dbReference>
<dbReference type="PRINTS" id="PR00320">
    <property type="entry name" value="GPROTEINBRPT"/>
</dbReference>
<dbReference type="SMART" id="SM00320">
    <property type="entry name" value="WD40"/>
    <property type="match status" value="6"/>
</dbReference>
<dbReference type="SUPFAM" id="SSF50978">
    <property type="entry name" value="WD40 repeat-like"/>
    <property type="match status" value="1"/>
</dbReference>
<dbReference type="PROSITE" id="PS00678">
    <property type="entry name" value="WD_REPEATS_1"/>
    <property type="match status" value="2"/>
</dbReference>
<dbReference type="PROSITE" id="PS50082">
    <property type="entry name" value="WD_REPEATS_2"/>
    <property type="match status" value="3"/>
</dbReference>
<dbReference type="PROSITE" id="PS50294">
    <property type="entry name" value="WD_REPEATS_REGION"/>
    <property type="match status" value="1"/>
</dbReference>
<comment type="function">
    <text evidence="2 3 4 5">Receptor required for the peroxisomal import of proteins containing a C-terminal PTS2-type peroxisomal targeting signal, such as 3-oxoacyl-CoA thiolase (PubMed:23812376, PubMed:7535304, PubMed:7957058). Specifically binds to cargo proteins containing a PTS2 peroxisomal targeting signal in the cytosol (PubMed:23812376). Cargo protein-binding triggers interaction with PEX21 and formation of a ternary complex composed of PEX21 and PEX7 along with PTS2-containing cargo proteins, which is tranlocated into peroxisomes by passing through the PEX13-PEX14 docking complex (PubMed:23812376, PubMed:9094717).</text>
</comment>
<comment type="subunit">
    <text evidence="2">Interacts with PEX21.</text>
</comment>
<comment type="interaction">
    <interactant intactId="EBI-13183">
        <id>P39108</id>
    </interactant>
    <interactant intactId="EBI-24803">
        <id>P38855</id>
        <label>PEX18</label>
    </interactant>
    <organismsDiffer>false</organismsDiffer>
    <experiments>6</experiments>
</comment>
<comment type="interaction">
    <interactant intactId="EBI-13183">
        <id>P39108</id>
    </interactant>
    <interactant intactId="EBI-23549">
        <id>P50091</id>
        <label>PEX21</label>
    </interactant>
    <organismsDiffer>false</organismsDiffer>
    <experiments>13</experiments>
</comment>
<comment type="interaction">
    <interactant intactId="EBI-13183">
        <id>P39108</id>
    </interactant>
    <interactant intactId="EBI-19236">
        <id>P27796</id>
        <label>POT1</label>
    </interactant>
    <organismsDiffer>false</organismsDiffer>
    <experiments>5</experiments>
</comment>
<comment type="subcellular location">
    <subcellularLocation>
        <location evidence="4">Cytoplasm</location>
        <location evidence="4">Cytosol</location>
    </subcellularLocation>
    <subcellularLocation>
        <location evidence="3 4">Peroxisome matrix</location>
    </subcellularLocation>
</comment>
<comment type="miscellaneous">
    <text evidence="1">Present with 589 molecules/cell in log phase SD medium.</text>
</comment>
<comment type="similarity">
    <text evidence="8">Belongs to the WD repeat peroxin-7 family.</text>
</comment>